<sequence>MLWRDVCEIFNKIEKTTKRLEKRDYFIKLIDMVKEKGKPEDLKKICYMAIGRVYPEYDERELGIGEKLLINAVTSIGIKKDELLEKIKETGDIGLAIEQLKSKIKQASLFFQPLTVDEVYETLKRVGEIEGEGSQKKKLRLISSLFLRASPIECRYLARLILEDMRIGMNVPTILDALSVYFNVPKEKLEKIYAITNDIGLLAEKLLMGDLESEELKLKLFRPIKPMLAQLTPSIEEALLEMGRAQFETKYDGARVQIHKDGNKVKIYSRRLEDVTNALPEIVEAVKNINVDKLIVEGECVAIDKQTGKPRPFQDILRRFRRKYDIGKMMKEINLRVYLFDILYKDGVSFIDEEFEKRRKVLEEIVGYENDWRTERKRIEKELKSDKIIDISYKLVTNDAKEAREFYNWSLSIGHEGVMIKNLKAPYTPGSRVRTMYKFKPTLESLDVVITKAKRGMGKRKDWYGSFEICVRDEEGNLYPIGHVGTGLTEADLEFLKEEIDKIIIRDLGEEVEVEPKIVIEVAYEEIQKSDKYPCGYALRFPRVVRFRFDKGVNEINTIEDVERIYEIQRGRK</sequence>
<proteinExistence type="inferred from homology"/>
<protein>
    <recommendedName>
        <fullName evidence="1">DNA ligase</fullName>
        <ecNumber evidence="1">6.5.1.1</ecNumber>
    </recommendedName>
    <alternativeName>
        <fullName evidence="1">Polydeoxyribonucleotide synthase [ATP]</fullName>
    </alternativeName>
</protein>
<accession>Q57635</accession>
<reference key="1">
    <citation type="journal article" date="1996" name="Science">
        <title>Complete genome sequence of the methanogenic archaeon, Methanococcus jannaschii.</title>
        <authorList>
            <person name="Bult C.J."/>
            <person name="White O."/>
            <person name="Olsen G.J."/>
            <person name="Zhou L."/>
            <person name="Fleischmann R.D."/>
            <person name="Sutton G.G."/>
            <person name="Blake J.A."/>
            <person name="FitzGerald L.M."/>
            <person name="Clayton R.A."/>
            <person name="Gocayne J.D."/>
            <person name="Kerlavage A.R."/>
            <person name="Dougherty B.A."/>
            <person name="Tomb J.-F."/>
            <person name="Adams M.D."/>
            <person name="Reich C.I."/>
            <person name="Overbeek R."/>
            <person name="Kirkness E.F."/>
            <person name="Weinstock K.G."/>
            <person name="Merrick J.M."/>
            <person name="Glodek A."/>
            <person name="Scott J.L."/>
            <person name="Geoghagen N.S.M."/>
            <person name="Weidman J.F."/>
            <person name="Fuhrmann J.L."/>
            <person name="Nguyen D."/>
            <person name="Utterback T.R."/>
            <person name="Kelley J.M."/>
            <person name="Peterson J.D."/>
            <person name="Sadow P.W."/>
            <person name="Hanna M.C."/>
            <person name="Cotton M.D."/>
            <person name="Roberts K.M."/>
            <person name="Hurst M.A."/>
            <person name="Kaine B.P."/>
            <person name="Borodovsky M."/>
            <person name="Klenk H.-P."/>
            <person name="Fraser C.M."/>
            <person name="Smith H.O."/>
            <person name="Woese C.R."/>
            <person name="Venter J.C."/>
        </authorList>
    </citation>
    <scope>NUCLEOTIDE SEQUENCE [LARGE SCALE GENOMIC DNA]</scope>
    <source>
        <strain>ATCC 43067 / DSM 2661 / JAL-1 / JCM 10045 / NBRC 100440</strain>
    </source>
</reference>
<comment type="function">
    <text evidence="1">DNA ligase that seals nicks in double-stranded DNA during DNA replication, DNA recombination and DNA repair.</text>
</comment>
<comment type="catalytic activity">
    <reaction evidence="1">
        <text>ATP + (deoxyribonucleotide)n-3'-hydroxyl + 5'-phospho-(deoxyribonucleotide)m = (deoxyribonucleotide)n+m + AMP + diphosphate.</text>
        <dbReference type="EC" id="6.5.1.1"/>
    </reaction>
</comment>
<comment type="cofactor">
    <cofactor evidence="1">
        <name>Mg(2+)</name>
        <dbReference type="ChEBI" id="CHEBI:18420"/>
    </cofactor>
</comment>
<comment type="similarity">
    <text evidence="1">Belongs to the ATP-dependent DNA ligase family.</text>
</comment>
<dbReference type="EC" id="6.5.1.1" evidence="1"/>
<dbReference type="EMBL" id="L77117">
    <property type="protein sequence ID" value="AAB98156.1"/>
    <property type="molecule type" value="Genomic_DNA"/>
</dbReference>
<dbReference type="PIR" id="D64321">
    <property type="entry name" value="D64321"/>
</dbReference>
<dbReference type="RefSeq" id="WP_010869666.1">
    <property type="nucleotide sequence ID" value="NC_000909.1"/>
</dbReference>
<dbReference type="SMR" id="Q57635"/>
<dbReference type="FunCoup" id="Q57635">
    <property type="interactions" value="162"/>
</dbReference>
<dbReference type="STRING" id="243232.MJ_0171"/>
<dbReference type="PaxDb" id="243232-MJ_0171"/>
<dbReference type="EnsemblBacteria" id="AAB98156">
    <property type="protein sequence ID" value="AAB98156"/>
    <property type="gene ID" value="MJ_0171"/>
</dbReference>
<dbReference type="GeneID" id="1451018"/>
<dbReference type="KEGG" id="mja:MJ_0171"/>
<dbReference type="eggNOG" id="arCOG01347">
    <property type="taxonomic scope" value="Archaea"/>
</dbReference>
<dbReference type="HOGENOM" id="CLU_005138_6_0_2"/>
<dbReference type="InParanoid" id="Q57635"/>
<dbReference type="OrthoDB" id="31274at2157"/>
<dbReference type="PhylomeDB" id="Q57635"/>
<dbReference type="BRENDA" id="6.5.1.1">
    <property type="organism ID" value="3260"/>
</dbReference>
<dbReference type="Proteomes" id="UP000000805">
    <property type="component" value="Chromosome"/>
</dbReference>
<dbReference type="GO" id="GO:0005524">
    <property type="term" value="F:ATP binding"/>
    <property type="evidence" value="ECO:0007669"/>
    <property type="project" value="UniProtKB-UniRule"/>
</dbReference>
<dbReference type="GO" id="GO:0003677">
    <property type="term" value="F:DNA binding"/>
    <property type="evidence" value="ECO:0007669"/>
    <property type="project" value="InterPro"/>
</dbReference>
<dbReference type="GO" id="GO:0003910">
    <property type="term" value="F:DNA ligase (ATP) activity"/>
    <property type="evidence" value="ECO:0000318"/>
    <property type="project" value="GO_Central"/>
</dbReference>
<dbReference type="GO" id="GO:0046872">
    <property type="term" value="F:metal ion binding"/>
    <property type="evidence" value="ECO:0007669"/>
    <property type="project" value="UniProtKB-KW"/>
</dbReference>
<dbReference type="GO" id="GO:0051301">
    <property type="term" value="P:cell division"/>
    <property type="evidence" value="ECO:0007669"/>
    <property type="project" value="UniProtKB-KW"/>
</dbReference>
<dbReference type="GO" id="GO:0071897">
    <property type="term" value="P:DNA biosynthetic process"/>
    <property type="evidence" value="ECO:0007669"/>
    <property type="project" value="InterPro"/>
</dbReference>
<dbReference type="GO" id="GO:0006310">
    <property type="term" value="P:DNA recombination"/>
    <property type="evidence" value="ECO:0007669"/>
    <property type="project" value="UniProtKB-UniRule"/>
</dbReference>
<dbReference type="GO" id="GO:0006281">
    <property type="term" value="P:DNA repair"/>
    <property type="evidence" value="ECO:0007669"/>
    <property type="project" value="UniProtKB-UniRule"/>
</dbReference>
<dbReference type="GO" id="GO:0006273">
    <property type="term" value="P:lagging strand elongation"/>
    <property type="evidence" value="ECO:0000318"/>
    <property type="project" value="GO_Central"/>
</dbReference>
<dbReference type="CDD" id="cd07901">
    <property type="entry name" value="Adenylation_DNA_ligase_Arch_LigB"/>
    <property type="match status" value="1"/>
</dbReference>
<dbReference type="CDD" id="cd07972">
    <property type="entry name" value="OBF_DNA_ligase_Arch_LigB"/>
    <property type="match status" value="1"/>
</dbReference>
<dbReference type="FunFam" id="1.10.3260.10:FF:000007">
    <property type="entry name" value="DNA ligase"/>
    <property type="match status" value="1"/>
</dbReference>
<dbReference type="FunFam" id="3.30.470.30:FF:000012">
    <property type="entry name" value="Probable DNA ligase"/>
    <property type="match status" value="1"/>
</dbReference>
<dbReference type="Gene3D" id="1.10.3260.10">
    <property type="entry name" value="DNA ligase, ATP-dependent, N-terminal domain"/>
    <property type="match status" value="1"/>
</dbReference>
<dbReference type="Gene3D" id="3.30.470.30">
    <property type="entry name" value="DNA ligase/mRNA capping enzyme"/>
    <property type="match status" value="1"/>
</dbReference>
<dbReference type="Gene3D" id="2.40.50.140">
    <property type="entry name" value="Nucleic acid-binding proteins"/>
    <property type="match status" value="1"/>
</dbReference>
<dbReference type="HAMAP" id="MF_00407">
    <property type="entry name" value="DNA_ligase"/>
    <property type="match status" value="1"/>
</dbReference>
<dbReference type="InterPro" id="IPR050191">
    <property type="entry name" value="ATP-dep_DNA_ligase"/>
</dbReference>
<dbReference type="InterPro" id="IPR022865">
    <property type="entry name" value="DNA_ligae_ATP-dep_bac/arc"/>
</dbReference>
<dbReference type="InterPro" id="IPR000977">
    <property type="entry name" value="DNA_ligase_ATP-dep"/>
</dbReference>
<dbReference type="InterPro" id="IPR012309">
    <property type="entry name" value="DNA_ligase_ATP-dep_C"/>
</dbReference>
<dbReference type="InterPro" id="IPR012310">
    <property type="entry name" value="DNA_ligase_ATP-dep_cent"/>
</dbReference>
<dbReference type="InterPro" id="IPR016059">
    <property type="entry name" value="DNA_ligase_ATP-dep_CS"/>
</dbReference>
<dbReference type="InterPro" id="IPR012308">
    <property type="entry name" value="DNA_ligase_ATP-dep_N"/>
</dbReference>
<dbReference type="InterPro" id="IPR036599">
    <property type="entry name" value="DNA_ligase_N_sf"/>
</dbReference>
<dbReference type="InterPro" id="IPR012340">
    <property type="entry name" value="NA-bd_OB-fold"/>
</dbReference>
<dbReference type="NCBIfam" id="TIGR00574">
    <property type="entry name" value="dnl1"/>
    <property type="match status" value="1"/>
</dbReference>
<dbReference type="PANTHER" id="PTHR45674:SF7">
    <property type="entry name" value="DNA LIGASE"/>
    <property type="match status" value="1"/>
</dbReference>
<dbReference type="PANTHER" id="PTHR45674">
    <property type="entry name" value="DNA LIGASE 1/3 FAMILY MEMBER"/>
    <property type="match status" value="1"/>
</dbReference>
<dbReference type="Pfam" id="PF04679">
    <property type="entry name" value="DNA_ligase_A_C"/>
    <property type="match status" value="1"/>
</dbReference>
<dbReference type="Pfam" id="PF01068">
    <property type="entry name" value="DNA_ligase_A_M"/>
    <property type="match status" value="1"/>
</dbReference>
<dbReference type="Pfam" id="PF04675">
    <property type="entry name" value="DNA_ligase_A_N"/>
    <property type="match status" value="1"/>
</dbReference>
<dbReference type="SUPFAM" id="SSF117018">
    <property type="entry name" value="ATP-dependent DNA ligase DNA-binding domain"/>
    <property type="match status" value="1"/>
</dbReference>
<dbReference type="SUPFAM" id="SSF56091">
    <property type="entry name" value="DNA ligase/mRNA capping enzyme, catalytic domain"/>
    <property type="match status" value="1"/>
</dbReference>
<dbReference type="SUPFAM" id="SSF50249">
    <property type="entry name" value="Nucleic acid-binding proteins"/>
    <property type="match status" value="1"/>
</dbReference>
<dbReference type="PROSITE" id="PS00697">
    <property type="entry name" value="DNA_LIGASE_A1"/>
    <property type="match status" value="1"/>
</dbReference>
<dbReference type="PROSITE" id="PS00333">
    <property type="entry name" value="DNA_LIGASE_A2"/>
    <property type="match status" value="1"/>
</dbReference>
<dbReference type="PROSITE" id="PS50160">
    <property type="entry name" value="DNA_LIGASE_A3"/>
    <property type="match status" value="1"/>
</dbReference>
<gene>
    <name evidence="1" type="primary">lig</name>
    <name type="ordered locus">MJ0171</name>
</gene>
<name>DNLI_METJA</name>
<feature type="chain" id="PRO_0000059604" description="DNA ligase">
    <location>
        <begin position="1"/>
        <end position="573"/>
    </location>
</feature>
<feature type="active site" description="N6-AMP-lysine intermediate" evidence="1">
    <location>
        <position position="250"/>
    </location>
</feature>
<feature type="binding site" evidence="1">
    <location>
        <position position="248"/>
    </location>
    <ligand>
        <name>ATP</name>
        <dbReference type="ChEBI" id="CHEBI:30616"/>
    </ligand>
</feature>
<feature type="binding site" evidence="1">
    <location>
        <position position="255"/>
    </location>
    <ligand>
        <name>ATP</name>
        <dbReference type="ChEBI" id="CHEBI:30616"/>
    </ligand>
</feature>
<feature type="binding site" evidence="1">
    <location>
        <position position="270"/>
    </location>
    <ligand>
        <name>ATP</name>
        <dbReference type="ChEBI" id="CHEBI:30616"/>
    </ligand>
</feature>
<feature type="binding site" evidence="1">
    <location>
        <position position="299"/>
    </location>
    <ligand>
        <name>ATP</name>
        <dbReference type="ChEBI" id="CHEBI:30616"/>
    </ligand>
</feature>
<feature type="binding site" evidence="1">
    <location>
        <position position="340"/>
    </location>
    <ligand>
        <name>ATP</name>
        <dbReference type="ChEBI" id="CHEBI:30616"/>
    </ligand>
</feature>
<feature type="binding site" evidence="1">
    <location>
        <position position="432"/>
    </location>
    <ligand>
        <name>ATP</name>
        <dbReference type="ChEBI" id="CHEBI:30616"/>
    </ligand>
</feature>
<feature type="binding site" evidence="1">
    <location>
        <position position="438"/>
    </location>
    <ligand>
        <name>ATP</name>
        <dbReference type="ChEBI" id="CHEBI:30616"/>
    </ligand>
</feature>
<evidence type="ECO:0000255" key="1">
    <source>
        <dbReference type="HAMAP-Rule" id="MF_00407"/>
    </source>
</evidence>
<organism>
    <name type="scientific">Methanocaldococcus jannaschii (strain ATCC 43067 / DSM 2661 / JAL-1 / JCM 10045 / NBRC 100440)</name>
    <name type="common">Methanococcus jannaschii</name>
    <dbReference type="NCBI Taxonomy" id="243232"/>
    <lineage>
        <taxon>Archaea</taxon>
        <taxon>Methanobacteriati</taxon>
        <taxon>Methanobacteriota</taxon>
        <taxon>Methanomada group</taxon>
        <taxon>Methanococci</taxon>
        <taxon>Methanococcales</taxon>
        <taxon>Methanocaldococcaceae</taxon>
        <taxon>Methanocaldococcus</taxon>
    </lineage>
</organism>
<keyword id="KW-0067">ATP-binding</keyword>
<keyword id="KW-0131">Cell cycle</keyword>
<keyword id="KW-0132">Cell division</keyword>
<keyword id="KW-0227">DNA damage</keyword>
<keyword id="KW-0233">DNA recombination</keyword>
<keyword id="KW-0234">DNA repair</keyword>
<keyword id="KW-0235">DNA replication</keyword>
<keyword id="KW-0436">Ligase</keyword>
<keyword id="KW-0460">Magnesium</keyword>
<keyword id="KW-0479">Metal-binding</keyword>
<keyword id="KW-0547">Nucleotide-binding</keyword>
<keyword id="KW-1185">Reference proteome</keyword>